<organism>
    <name type="scientific">Bos taurus</name>
    <name type="common">Bovine</name>
    <dbReference type="NCBI Taxonomy" id="9913"/>
    <lineage>
        <taxon>Eukaryota</taxon>
        <taxon>Metazoa</taxon>
        <taxon>Chordata</taxon>
        <taxon>Craniata</taxon>
        <taxon>Vertebrata</taxon>
        <taxon>Euteleostomi</taxon>
        <taxon>Mammalia</taxon>
        <taxon>Eutheria</taxon>
        <taxon>Laurasiatheria</taxon>
        <taxon>Artiodactyla</taxon>
        <taxon>Ruminantia</taxon>
        <taxon>Pecora</taxon>
        <taxon>Bovidae</taxon>
        <taxon>Bovinae</taxon>
        <taxon>Bos</taxon>
    </lineage>
</organism>
<sequence>MDLEEAREFRERCSQCAAVSWGLTDEGKYYCTSCHNVTERSREVIDTGAIPNTKIQAINRGLKRKRKLEKGWDWYVCEGFQHILYQQAEALQSLGVGPELKNEVLHNFWKRYLQKSKQAYCKNPVYTSRRKTTVLEDNLSHSDWESEPELLSDMSCLSFAESGAESQPDVRTPKPFPIIKASHSETTSVCSGSLDGVEYSLRKEKGVMKMSVPRTLAFCYLSLLWQRETITLSDLLRFVEEEHIPYIHAFQHFPEEMKLYGRDKGIFAIESWPNYEVIFKKIIEVATFLDLPRFPDITENCYLHPNILCMKYLMEVNLPDEMHNVTCLVVKSTGIGEVDFLRFDPIAKKAKTVKYDVQAVAVIVVALKLLFLLDDNLEWSLSNIAKKYNEKNKEDKPWFDFRKWYQVMKKAIDEKKQKWEEARAKFLWKGEKPLYYSAIDRPVVYKRREMVVSLQKQFSTLVDSAPNVEKKKPSSFQFNWTEEDSERPCFHGHSLQGVLQQKGQSLTTKNSLYWLSTQKFCKSHCKHVTTYEESNFSLSYQFILNLFSFLLRIKTSFLHEEVSLIEKRLFKAKYNKTNKKSSRSRKTRKY</sequence>
<keyword id="KW-0007">Acetylation</keyword>
<keyword id="KW-0238">DNA-binding</keyword>
<keyword id="KW-0479">Metal-binding</keyword>
<keyword id="KW-0539">Nucleus</keyword>
<keyword id="KW-1185">Reference proteome</keyword>
<keyword id="KW-0804">Transcription</keyword>
<keyword id="KW-0805">Transcription regulation</keyword>
<keyword id="KW-0862">Zinc</keyword>
<keyword id="KW-0863">Zinc-finger</keyword>
<dbReference type="EMBL" id="DAAA02031936">
    <property type="status" value="NOT_ANNOTATED_CDS"/>
    <property type="molecule type" value="Genomic_DNA"/>
</dbReference>
<dbReference type="EMBL" id="DAAA02031937">
    <property type="status" value="NOT_ANNOTATED_CDS"/>
    <property type="molecule type" value="Genomic_DNA"/>
</dbReference>
<dbReference type="EMBL" id="AAFC03016422">
    <property type="status" value="NOT_ANNOTATED_CDS"/>
    <property type="molecule type" value="Genomic_DNA"/>
</dbReference>
<dbReference type="EMBL" id="AAFC03016423">
    <property type="status" value="NOT_ANNOTATED_CDS"/>
    <property type="molecule type" value="Genomic_DNA"/>
</dbReference>
<dbReference type="EMBL" id="AAFC03016426">
    <property type="status" value="NOT_ANNOTATED_CDS"/>
    <property type="molecule type" value="Genomic_DNA"/>
</dbReference>
<dbReference type="EMBL" id="AAFC03034356">
    <property type="status" value="NOT_ANNOTATED_CDS"/>
    <property type="molecule type" value="Genomic_DNA"/>
</dbReference>
<dbReference type="EMBL" id="AAFC03034357">
    <property type="status" value="NOT_ANNOTATED_CDS"/>
    <property type="molecule type" value="Genomic_DNA"/>
</dbReference>
<dbReference type="EMBL" id="BC116032">
    <property type="protein sequence ID" value="AAI16033.1"/>
    <property type="molecule type" value="mRNA"/>
</dbReference>
<dbReference type="RefSeq" id="NP_001068971.1">
    <property type="nucleotide sequence ID" value="NM_001075503.1"/>
</dbReference>
<dbReference type="FunCoup" id="Q1JQD6">
    <property type="interactions" value="3010"/>
</dbReference>
<dbReference type="STRING" id="9913.ENSBTAP00000041230"/>
<dbReference type="PaxDb" id="9913-ENSBTAP00000041230"/>
<dbReference type="Ensembl" id="ENSBTAT00000106337.1">
    <property type="protein sequence ID" value="ENSBTAP00000079455.1"/>
    <property type="gene ID" value="ENSBTAG00000007543.7"/>
</dbReference>
<dbReference type="GeneID" id="511236"/>
<dbReference type="KEGG" id="bta:511236"/>
<dbReference type="CTD" id="9014"/>
<dbReference type="VEuPathDB" id="HostDB:ENSBTAG00000007543"/>
<dbReference type="VGNC" id="VGNC:35570">
    <property type="gene designation" value="TAF1B"/>
</dbReference>
<dbReference type="eggNOG" id="ENOG502QVGU">
    <property type="taxonomic scope" value="Eukaryota"/>
</dbReference>
<dbReference type="GeneTree" id="ENSGT00440000033827"/>
<dbReference type="HOGENOM" id="CLU_032815_0_0_1"/>
<dbReference type="InParanoid" id="Q1JQD6"/>
<dbReference type="OMA" id="SFRFCWG"/>
<dbReference type="OrthoDB" id="10069252at2759"/>
<dbReference type="TreeFam" id="TF324353"/>
<dbReference type="Reactome" id="R-BTA-5250924">
    <property type="pathway name" value="B-WICH complex positively regulates rRNA expression"/>
</dbReference>
<dbReference type="Reactome" id="R-BTA-73762">
    <property type="pathway name" value="RNA Polymerase I Transcription Initiation"/>
</dbReference>
<dbReference type="Reactome" id="R-BTA-73772">
    <property type="pathway name" value="RNA Polymerase I Promoter Escape"/>
</dbReference>
<dbReference type="Reactome" id="R-BTA-73863">
    <property type="pathway name" value="RNA Polymerase I Transcription Termination"/>
</dbReference>
<dbReference type="Proteomes" id="UP000009136">
    <property type="component" value="Chromosome 11"/>
</dbReference>
<dbReference type="Bgee" id="ENSBTAG00000007543">
    <property type="expression patterns" value="Expressed in oocyte and 104 other cell types or tissues"/>
</dbReference>
<dbReference type="GO" id="GO:0070860">
    <property type="term" value="C:RNA polymerase I core factor complex"/>
    <property type="evidence" value="ECO:0000318"/>
    <property type="project" value="GO_Central"/>
</dbReference>
<dbReference type="GO" id="GO:0005668">
    <property type="term" value="C:RNA polymerase transcription factor SL1 complex"/>
    <property type="evidence" value="ECO:0000318"/>
    <property type="project" value="GO_Central"/>
</dbReference>
<dbReference type="GO" id="GO:0001164">
    <property type="term" value="F:RNA polymerase I core promoter sequence-specific DNA binding"/>
    <property type="evidence" value="ECO:0000250"/>
    <property type="project" value="UniProtKB"/>
</dbReference>
<dbReference type="GO" id="GO:0008270">
    <property type="term" value="F:zinc ion binding"/>
    <property type="evidence" value="ECO:0007669"/>
    <property type="project" value="UniProtKB-KW"/>
</dbReference>
<dbReference type="GO" id="GO:0042790">
    <property type="term" value="P:nucleolar large rRNA transcription by RNA polymerase I"/>
    <property type="evidence" value="ECO:0000318"/>
    <property type="project" value="GO_Central"/>
</dbReference>
<dbReference type="GO" id="GO:0001188">
    <property type="term" value="P:RNA polymerase I preinitiation complex assembly"/>
    <property type="evidence" value="ECO:0000250"/>
    <property type="project" value="UniProtKB"/>
</dbReference>
<dbReference type="InterPro" id="IPR048538">
    <property type="entry name" value="Rrn7_cyclin_C"/>
</dbReference>
<dbReference type="InterPro" id="IPR048540">
    <property type="entry name" value="Rrn7_cyclin_N"/>
</dbReference>
<dbReference type="InterPro" id="IPR033599">
    <property type="entry name" value="TAF1B/Rrn7"/>
</dbReference>
<dbReference type="InterPro" id="IPR021752">
    <property type="entry name" value="TF_Rrn7_Zf"/>
</dbReference>
<dbReference type="PANTHER" id="PTHR31576">
    <property type="entry name" value="TATA BOX-BINDING PROTEIN-ASSOCIATED FACTOR RNA POLYMERASE I SUBUNIT B"/>
    <property type="match status" value="1"/>
</dbReference>
<dbReference type="PANTHER" id="PTHR31576:SF2">
    <property type="entry name" value="TATA BOX-BINDING PROTEIN-ASSOCIATED FACTOR RNA POLYMERASE I SUBUNIT B"/>
    <property type="match status" value="1"/>
</dbReference>
<dbReference type="Pfam" id="PF20645">
    <property type="entry name" value="Rrn7_cyclin_C"/>
    <property type="match status" value="1"/>
</dbReference>
<dbReference type="Pfam" id="PF20644">
    <property type="entry name" value="Rrn7_cyclin_N"/>
    <property type="match status" value="1"/>
</dbReference>
<dbReference type="Pfam" id="PF11781">
    <property type="entry name" value="Zn_ribbon_RRN7"/>
    <property type="match status" value="1"/>
</dbReference>
<accession>Q1JQD6</accession>
<accession>E1BGL1</accession>
<proteinExistence type="evidence at transcript level"/>
<name>TAF1B_BOVIN</name>
<evidence type="ECO:0000250" key="1"/>
<evidence type="ECO:0000250" key="2">
    <source>
        <dbReference type="UniProtKB" id="Q53T94"/>
    </source>
</evidence>
<evidence type="ECO:0000305" key="3"/>
<comment type="function">
    <text evidence="2">Component of RNA polymerase I core factor complex that acts as a GTF2B/TFIIB-like factor and plays a key role in multiple steps during transcription initiation such as pre-initiation complex (PIC) assembly and postpolymerase recruitment events in polymerase I (Pol I) transcription. Binds rDNA promoters and plays a role in Pol I recruitment as a component of the SL1/TIF-IB complex and, possibly, directly through its interaction with RRN3 (By similarity).</text>
</comment>
<comment type="subunit">
    <text evidence="1 2">Interacts with FLNA (via N-terminus) (By similarity). Component of the transcription factor SL1/TIF-IB complex, composed of TBP and at least TAF1A, TAF1B, TAF1C and TAF1D. In the complex interacts directly with TBP, TAF1A and TAF1C. Interaction of the SL1/TIF-IB subunits with TBP excludes interaction of TBP with the transcription factor IID (TFIID) subunits. Interacts with TBP and RRN3 (By similarity). Part of Pol I pre-initiation complex (PIC), in which Pol I core assembles with RRN3 and promoter-bound UTBF and SL1/TIF-IB complex.</text>
</comment>
<comment type="subcellular location">
    <subcellularLocation>
        <location evidence="2">Nucleus</location>
        <location evidence="2">Nucleolus</location>
    </subcellularLocation>
</comment>
<comment type="domain">
    <text evidence="1">Although it shares weak sequence similarity with GTF2B/TFIIB, displays a similar subdomain organization as GTF2B/TFIIB, with a N-terminal zinc finger, a connecting region (composed of B-reader and B-linker regions), followed by 2 cyclin folds. The RRN7-type zinc finger plays an essential postrecruitment role in Pol I transcription at a step preceding synthesis of the first 40 nucleotides (By similarity).</text>
</comment>
<comment type="similarity">
    <text evidence="3">Belongs to the RRN7/TAF1B family.</text>
</comment>
<protein>
    <recommendedName>
        <fullName>TATA box-binding protein-associated factor RNA polymerase I subunit B</fullName>
    </recommendedName>
    <alternativeName>
        <fullName>RNA polymerase I-specific TBP-associated factor 63 kDa</fullName>
        <shortName>TAFI63</shortName>
    </alternativeName>
    <alternativeName>
        <fullName>TATA box-binding protein-associated factor 1B</fullName>
        <shortName>TBP-associated factor 1B</shortName>
    </alternativeName>
    <alternativeName>
        <fullName>Transcription initiation factor SL1/TIF-IB subunit B</fullName>
    </alternativeName>
</protein>
<reference key="1">
    <citation type="journal article" date="2009" name="Genome Biol.">
        <title>A whole-genome assembly of the domestic cow, Bos taurus.</title>
        <authorList>
            <person name="Zimin A.V."/>
            <person name="Delcher A.L."/>
            <person name="Florea L."/>
            <person name="Kelley D.R."/>
            <person name="Schatz M.C."/>
            <person name="Puiu D."/>
            <person name="Hanrahan F."/>
            <person name="Pertea G."/>
            <person name="Van Tassell C.P."/>
            <person name="Sonstegard T.S."/>
            <person name="Marcais G."/>
            <person name="Roberts M."/>
            <person name="Subramanian P."/>
            <person name="Yorke J.A."/>
            <person name="Salzberg S.L."/>
        </authorList>
    </citation>
    <scope>NUCLEOTIDE SEQUENCE [LARGE SCALE GENOMIC DNA]</scope>
    <source>
        <strain>Hereford</strain>
    </source>
</reference>
<reference key="2">
    <citation type="journal article" date="2009" name="Science">
        <title>The genome sequence of taurine cattle: a window to ruminant biology and evolution.</title>
        <authorList>
            <consortium name="The bovine genome sequencing and analysis consortium"/>
        </authorList>
    </citation>
    <scope>NUCLEOTIDE SEQUENCE [LARGE SCALE GENOMIC DNA]</scope>
    <source>
        <strain>Hereford</strain>
    </source>
</reference>
<reference key="3">
    <citation type="submission" date="2006-05" db="EMBL/GenBank/DDBJ databases">
        <authorList>
            <consortium name="NIH - Mammalian Gene Collection (MGC) project"/>
        </authorList>
    </citation>
    <scope>NUCLEOTIDE SEQUENCE [LARGE SCALE MRNA]</scope>
    <source>
        <strain>Hereford</strain>
        <tissue>Ascending colon</tissue>
    </source>
</reference>
<gene>
    <name type="primary">TAF1B</name>
</gene>
<feature type="chain" id="PRO_0000416868" description="TATA box-binding protein-associated factor RNA polymerase I subunit B">
    <location>
        <begin position="1"/>
        <end position="590"/>
    </location>
</feature>
<feature type="zinc finger region" description="RRN7-type">
    <location>
        <begin position="4"/>
        <end position="39"/>
    </location>
</feature>
<feature type="region of interest" description="B-reader" evidence="1">
    <location>
        <begin position="40"/>
        <end position="68"/>
    </location>
</feature>
<feature type="region of interest" description="B-linker" evidence="1">
    <location>
        <begin position="69"/>
        <end position="73"/>
    </location>
</feature>
<feature type="region of interest" description="N-terminal cyclin fold" evidence="1">
    <location>
        <begin position="74"/>
        <end position="262"/>
    </location>
</feature>
<feature type="region of interest" description="C-terminal cyclin fold" evidence="1">
    <location>
        <begin position="263"/>
        <end position="373"/>
    </location>
</feature>
<feature type="binding site" evidence="1">
    <location>
        <position position="13"/>
    </location>
    <ligand>
        <name>Zn(2+)</name>
        <dbReference type="ChEBI" id="CHEBI:29105"/>
    </ligand>
</feature>
<feature type="binding site" evidence="1">
    <location>
        <position position="16"/>
    </location>
    <ligand>
        <name>Zn(2+)</name>
        <dbReference type="ChEBI" id="CHEBI:29105"/>
    </ligand>
</feature>
<feature type="binding site" evidence="1">
    <location>
        <position position="31"/>
    </location>
    <ligand>
        <name>Zn(2+)</name>
        <dbReference type="ChEBI" id="CHEBI:29105"/>
    </ligand>
</feature>
<feature type="binding site" evidence="1">
    <location>
        <position position="34"/>
    </location>
    <ligand>
        <name>Zn(2+)</name>
        <dbReference type="ChEBI" id="CHEBI:29105"/>
    </ligand>
</feature>
<feature type="modified residue" description="N-acetylmethionine" evidence="2">
    <location>
        <position position="1"/>
    </location>
</feature>